<reference key="1">
    <citation type="journal article" date="2007" name="J. Bacteriol.">
        <title>The complete genome sequence of Bacillus thuringiensis Al Hakam.</title>
        <authorList>
            <person name="Challacombe J.F."/>
            <person name="Altherr M.R."/>
            <person name="Xie G."/>
            <person name="Bhotika S.S."/>
            <person name="Brown N."/>
            <person name="Bruce D."/>
            <person name="Campbell C.S."/>
            <person name="Campbell M.L."/>
            <person name="Chen J."/>
            <person name="Chertkov O."/>
            <person name="Cleland C."/>
            <person name="Dimitrijevic M."/>
            <person name="Doggett N.A."/>
            <person name="Fawcett J.J."/>
            <person name="Glavina T."/>
            <person name="Goodwin L.A."/>
            <person name="Green L.D."/>
            <person name="Han C.S."/>
            <person name="Hill K.K."/>
            <person name="Hitchcock P."/>
            <person name="Jackson P.J."/>
            <person name="Keim P."/>
            <person name="Kewalramani A.R."/>
            <person name="Longmire J."/>
            <person name="Lucas S."/>
            <person name="Malfatti S."/>
            <person name="Martinez D."/>
            <person name="McMurry K."/>
            <person name="Meincke L.J."/>
            <person name="Misra M."/>
            <person name="Moseman B.L."/>
            <person name="Mundt M."/>
            <person name="Munk A.C."/>
            <person name="Okinaka R.T."/>
            <person name="Parson-Quintana B."/>
            <person name="Reilly L.P."/>
            <person name="Richardson P."/>
            <person name="Robinson D.L."/>
            <person name="Saunders E."/>
            <person name="Tapia R."/>
            <person name="Tesmer J.G."/>
            <person name="Thayer N."/>
            <person name="Thompson L.S."/>
            <person name="Tice H."/>
            <person name="Ticknor L.O."/>
            <person name="Wills P.L."/>
            <person name="Gilna P."/>
            <person name="Brettin T.S."/>
        </authorList>
    </citation>
    <scope>NUCLEOTIDE SEQUENCE [LARGE SCALE GENOMIC DNA]</scope>
    <source>
        <strain>Al Hakam</strain>
    </source>
</reference>
<sequence length="509" mass="56313">MRKPTALIILDGFGLREETYGNAVAQAKKPNFDGYWNKFPHTTLTACGEAVGLPEGQMGNSEVGHLNIGAGRIVYQSLTRVNVAIREGEFDKNETFQSAIKSVKEKGTALHLFGLLSDGGVHSHMNHMFALLRLAAKEGVEKVYIHAFLDGRDVGPKTAQSYIDATNEVMKETGVGQFATISGRYYSMDRDKRWDRVEKCYRAMVNGEGPTYKSAEECVEDSYANGIYDEFVLPSVIVNEDNTPVATINDDDAVIFYNFRPDRAIQIARVFTNEDFREFDRGEKVPHIPEFVCMTHFSETVDGYVAFKPMNLDNTLGEVVAQAGLKQLRIAETEKYPHVTFFFSGGREAEFPGEERILINSPKVATYDLKPEMSIYEVTDALVNEIENDKHDVIILNFANCDMVGHSGMMEPTIKAVEATDECLGKVVEAILAKDGVALITADHGNADEELTSEGEPMTAHTTNPVPFIVTKNDVELREGGILGDIAPTMLTLLGVEQPKEMTGKTIIK</sequence>
<feature type="chain" id="PRO_1000063948" description="2,3-bisphosphoglycerate-independent phosphoglycerate mutase">
    <location>
        <begin position="1"/>
        <end position="509"/>
    </location>
</feature>
<feature type="active site" description="Phosphoserine intermediate" evidence="1">
    <location>
        <position position="61"/>
    </location>
</feature>
<feature type="binding site" evidence="1">
    <location>
        <position position="11"/>
    </location>
    <ligand>
        <name>Mn(2+)</name>
        <dbReference type="ChEBI" id="CHEBI:29035"/>
        <label>2</label>
    </ligand>
</feature>
<feature type="binding site" evidence="1">
    <location>
        <position position="61"/>
    </location>
    <ligand>
        <name>Mn(2+)</name>
        <dbReference type="ChEBI" id="CHEBI:29035"/>
        <label>2</label>
    </ligand>
</feature>
<feature type="binding site" evidence="1">
    <location>
        <position position="122"/>
    </location>
    <ligand>
        <name>substrate</name>
    </ligand>
</feature>
<feature type="binding site" evidence="1">
    <location>
        <begin position="152"/>
        <end position="153"/>
    </location>
    <ligand>
        <name>substrate</name>
    </ligand>
</feature>
<feature type="binding site" evidence="1">
    <location>
        <position position="184"/>
    </location>
    <ligand>
        <name>substrate</name>
    </ligand>
</feature>
<feature type="binding site" evidence="1">
    <location>
        <position position="190"/>
    </location>
    <ligand>
        <name>substrate</name>
    </ligand>
</feature>
<feature type="binding site" evidence="1">
    <location>
        <begin position="260"/>
        <end position="263"/>
    </location>
    <ligand>
        <name>substrate</name>
    </ligand>
</feature>
<feature type="binding site" evidence="1">
    <location>
        <position position="335"/>
    </location>
    <ligand>
        <name>substrate</name>
    </ligand>
</feature>
<feature type="binding site" evidence="1">
    <location>
        <position position="402"/>
    </location>
    <ligand>
        <name>Mn(2+)</name>
        <dbReference type="ChEBI" id="CHEBI:29035"/>
        <label>1</label>
    </ligand>
</feature>
<feature type="binding site" evidence="1">
    <location>
        <position position="406"/>
    </location>
    <ligand>
        <name>Mn(2+)</name>
        <dbReference type="ChEBI" id="CHEBI:29035"/>
        <label>1</label>
    </ligand>
</feature>
<feature type="binding site" evidence="1">
    <location>
        <position position="443"/>
    </location>
    <ligand>
        <name>Mn(2+)</name>
        <dbReference type="ChEBI" id="CHEBI:29035"/>
        <label>2</label>
    </ligand>
</feature>
<feature type="binding site" evidence="1">
    <location>
        <position position="444"/>
    </location>
    <ligand>
        <name>Mn(2+)</name>
        <dbReference type="ChEBI" id="CHEBI:29035"/>
        <label>2</label>
    </ligand>
</feature>
<feature type="binding site" evidence="1">
    <location>
        <position position="461"/>
    </location>
    <ligand>
        <name>Mn(2+)</name>
        <dbReference type="ChEBI" id="CHEBI:29035"/>
        <label>1</label>
    </ligand>
</feature>
<feature type="modified residue" description="Phosphotyrosine" evidence="1">
    <location>
        <position position="35"/>
    </location>
</feature>
<keyword id="KW-0324">Glycolysis</keyword>
<keyword id="KW-0413">Isomerase</keyword>
<keyword id="KW-0464">Manganese</keyword>
<keyword id="KW-0479">Metal-binding</keyword>
<keyword id="KW-0597">Phosphoprotein</keyword>
<keyword id="KW-0749">Sporulation</keyword>
<organism>
    <name type="scientific">Bacillus thuringiensis (strain Al Hakam)</name>
    <dbReference type="NCBI Taxonomy" id="412694"/>
    <lineage>
        <taxon>Bacteria</taxon>
        <taxon>Bacillati</taxon>
        <taxon>Bacillota</taxon>
        <taxon>Bacilli</taxon>
        <taxon>Bacillales</taxon>
        <taxon>Bacillaceae</taxon>
        <taxon>Bacillus</taxon>
        <taxon>Bacillus cereus group</taxon>
    </lineage>
</organism>
<proteinExistence type="inferred from homology"/>
<gene>
    <name evidence="1" type="primary">gpmI</name>
    <name type="ordered locus">BALH_4628</name>
</gene>
<comment type="function">
    <text evidence="1">Essential for rapid growth and for sporulation. Catalyzes the interconversion of 2-phosphoglycerate and 3-phosphoglycerate.</text>
</comment>
<comment type="catalytic activity">
    <reaction evidence="1">
        <text>(2R)-2-phosphoglycerate = (2R)-3-phosphoglycerate</text>
        <dbReference type="Rhea" id="RHEA:15901"/>
        <dbReference type="ChEBI" id="CHEBI:58272"/>
        <dbReference type="ChEBI" id="CHEBI:58289"/>
        <dbReference type="EC" id="5.4.2.12"/>
    </reaction>
</comment>
<comment type="cofactor">
    <cofactor evidence="1">
        <name>Mn(2+)</name>
        <dbReference type="ChEBI" id="CHEBI:29035"/>
    </cofactor>
    <text evidence="1">Binds 2 manganese ions per subunit.</text>
</comment>
<comment type="pathway">
    <text evidence="1">Carbohydrate degradation; glycolysis; pyruvate from D-glyceraldehyde 3-phosphate: step 3/5.</text>
</comment>
<comment type="subunit">
    <text evidence="1">Monomer.</text>
</comment>
<comment type="similarity">
    <text evidence="1">Belongs to the BPG-independent phosphoglycerate mutase family.</text>
</comment>
<accession>A0RKS4</accession>
<protein>
    <recommendedName>
        <fullName evidence="1">2,3-bisphosphoglycerate-independent phosphoglycerate mutase</fullName>
        <shortName evidence="1">BPG-independent PGAM</shortName>
        <shortName evidence="1">Phosphoglyceromutase</shortName>
        <shortName evidence="1">iPGM</shortName>
        <ecNumber evidence="1">5.4.2.12</ecNumber>
    </recommendedName>
</protein>
<dbReference type="EC" id="5.4.2.12" evidence="1"/>
<dbReference type="EMBL" id="CP000485">
    <property type="protein sequence ID" value="ABK87817.1"/>
    <property type="molecule type" value="Genomic_DNA"/>
</dbReference>
<dbReference type="RefSeq" id="WP_001231156.1">
    <property type="nucleotide sequence ID" value="NC_008600.1"/>
</dbReference>
<dbReference type="SMR" id="A0RKS4"/>
<dbReference type="KEGG" id="btl:BALH_4628"/>
<dbReference type="HOGENOM" id="CLU_026099_2_0_9"/>
<dbReference type="UniPathway" id="UPA00109">
    <property type="reaction ID" value="UER00186"/>
</dbReference>
<dbReference type="GO" id="GO:0005829">
    <property type="term" value="C:cytosol"/>
    <property type="evidence" value="ECO:0007669"/>
    <property type="project" value="TreeGrafter"/>
</dbReference>
<dbReference type="GO" id="GO:0030145">
    <property type="term" value="F:manganese ion binding"/>
    <property type="evidence" value="ECO:0007669"/>
    <property type="project" value="UniProtKB-UniRule"/>
</dbReference>
<dbReference type="GO" id="GO:0004619">
    <property type="term" value="F:phosphoglycerate mutase activity"/>
    <property type="evidence" value="ECO:0007669"/>
    <property type="project" value="UniProtKB-EC"/>
</dbReference>
<dbReference type="GO" id="GO:0006007">
    <property type="term" value="P:glucose catabolic process"/>
    <property type="evidence" value="ECO:0007669"/>
    <property type="project" value="InterPro"/>
</dbReference>
<dbReference type="GO" id="GO:0006096">
    <property type="term" value="P:glycolytic process"/>
    <property type="evidence" value="ECO:0007669"/>
    <property type="project" value="UniProtKB-UniRule"/>
</dbReference>
<dbReference type="GO" id="GO:0030435">
    <property type="term" value="P:sporulation resulting in formation of a cellular spore"/>
    <property type="evidence" value="ECO:0007669"/>
    <property type="project" value="UniProtKB-KW"/>
</dbReference>
<dbReference type="CDD" id="cd16010">
    <property type="entry name" value="iPGM"/>
    <property type="match status" value="1"/>
</dbReference>
<dbReference type="FunFam" id="3.40.1450.10:FF:000001">
    <property type="entry name" value="2,3-bisphosphoglycerate-independent phosphoglycerate mutase"/>
    <property type="match status" value="1"/>
</dbReference>
<dbReference type="FunFam" id="3.40.720.10:FF:000001">
    <property type="entry name" value="2,3-bisphosphoglycerate-independent phosphoglycerate mutase"/>
    <property type="match status" value="1"/>
</dbReference>
<dbReference type="Gene3D" id="3.40.720.10">
    <property type="entry name" value="Alkaline Phosphatase, subunit A"/>
    <property type="match status" value="1"/>
</dbReference>
<dbReference type="Gene3D" id="3.40.1450.10">
    <property type="entry name" value="BPG-independent phosphoglycerate mutase, domain B"/>
    <property type="match status" value="1"/>
</dbReference>
<dbReference type="HAMAP" id="MF_01038">
    <property type="entry name" value="GpmI"/>
    <property type="match status" value="1"/>
</dbReference>
<dbReference type="InterPro" id="IPR017850">
    <property type="entry name" value="Alkaline_phosphatase_core_sf"/>
</dbReference>
<dbReference type="InterPro" id="IPR011258">
    <property type="entry name" value="BPG-indep_PGM_N"/>
</dbReference>
<dbReference type="InterPro" id="IPR006124">
    <property type="entry name" value="Metalloenzyme"/>
</dbReference>
<dbReference type="InterPro" id="IPR036646">
    <property type="entry name" value="PGAM_B_sf"/>
</dbReference>
<dbReference type="InterPro" id="IPR005995">
    <property type="entry name" value="Pgm_bpd_ind"/>
</dbReference>
<dbReference type="NCBIfam" id="TIGR01307">
    <property type="entry name" value="pgm_bpd_ind"/>
    <property type="match status" value="1"/>
</dbReference>
<dbReference type="PANTHER" id="PTHR31637">
    <property type="entry name" value="2,3-BISPHOSPHOGLYCERATE-INDEPENDENT PHOSPHOGLYCERATE MUTASE"/>
    <property type="match status" value="1"/>
</dbReference>
<dbReference type="PANTHER" id="PTHR31637:SF0">
    <property type="entry name" value="2,3-BISPHOSPHOGLYCERATE-INDEPENDENT PHOSPHOGLYCERATE MUTASE"/>
    <property type="match status" value="1"/>
</dbReference>
<dbReference type="Pfam" id="PF06415">
    <property type="entry name" value="iPGM_N"/>
    <property type="match status" value="1"/>
</dbReference>
<dbReference type="Pfam" id="PF01676">
    <property type="entry name" value="Metalloenzyme"/>
    <property type="match status" value="1"/>
</dbReference>
<dbReference type="PIRSF" id="PIRSF001492">
    <property type="entry name" value="IPGAM"/>
    <property type="match status" value="1"/>
</dbReference>
<dbReference type="SUPFAM" id="SSF64158">
    <property type="entry name" value="2,3-Bisphosphoglycerate-independent phosphoglycerate mutase, substrate-binding domain"/>
    <property type="match status" value="1"/>
</dbReference>
<dbReference type="SUPFAM" id="SSF53649">
    <property type="entry name" value="Alkaline phosphatase-like"/>
    <property type="match status" value="1"/>
</dbReference>
<evidence type="ECO:0000255" key="1">
    <source>
        <dbReference type="HAMAP-Rule" id="MF_01038"/>
    </source>
</evidence>
<name>GPMI_BACAH</name>